<dbReference type="EMBL" id="CR860320">
    <property type="protein sequence ID" value="CAH92457.1"/>
    <property type="molecule type" value="mRNA"/>
</dbReference>
<dbReference type="RefSeq" id="NP_001126448.1">
    <property type="nucleotide sequence ID" value="NM_001132976.1"/>
</dbReference>
<dbReference type="SMR" id="Q5R703"/>
<dbReference type="FunCoup" id="Q5R703">
    <property type="interactions" value="561"/>
</dbReference>
<dbReference type="STRING" id="9601.ENSPPYP00000013210"/>
<dbReference type="Ensembl" id="ENSPPYT00000035410.1">
    <property type="protein sequence ID" value="ENSPPYP00000026737.1"/>
    <property type="gene ID" value="ENSPPYG00000031983.1"/>
</dbReference>
<dbReference type="GeneID" id="100173433"/>
<dbReference type="KEGG" id="pon:100173433"/>
<dbReference type="CTD" id="9145"/>
<dbReference type="eggNOG" id="KOG0698">
    <property type="taxonomic scope" value="Eukaryota"/>
</dbReference>
<dbReference type="eggNOG" id="KOG4016">
    <property type="taxonomic scope" value="Eukaryota"/>
</dbReference>
<dbReference type="GeneTree" id="ENSGT00950000182935"/>
<dbReference type="InParanoid" id="Q5R703"/>
<dbReference type="OrthoDB" id="10041611at2759"/>
<dbReference type="Proteomes" id="UP000001595">
    <property type="component" value="Chromosome 22"/>
</dbReference>
<dbReference type="GO" id="GO:0042470">
    <property type="term" value="C:melanosome"/>
    <property type="evidence" value="ECO:0007669"/>
    <property type="project" value="UniProtKB-SubCell"/>
</dbReference>
<dbReference type="GO" id="GO:0031594">
    <property type="term" value="C:neuromuscular junction"/>
    <property type="evidence" value="ECO:0007669"/>
    <property type="project" value="TreeGrafter"/>
</dbReference>
<dbReference type="GO" id="GO:0098685">
    <property type="term" value="C:Schaffer collateral - CA1 synapse"/>
    <property type="evidence" value="ECO:0007669"/>
    <property type="project" value="Ensembl"/>
</dbReference>
<dbReference type="GO" id="GO:0030672">
    <property type="term" value="C:synaptic vesicle membrane"/>
    <property type="evidence" value="ECO:0007669"/>
    <property type="project" value="UniProtKB-SubCell"/>
</dbReference>
<dbReference type="GO" id="GO:1990830">
    <property type="term" value="P:cellular response to leukemia inhibitory factor"/>
    <property type="evidence" value="ECO:0007669"/>
    <property type="project" value="Ensembl"/>
</dbReference>
<dbReference type="GO" id="GO:0045055">
    <property type="term" value="P:regulated exocytosis"/>
    <property type="evidence" value="ECO:0000250"/>
    <property type="project" value="UniProtKB"/>
</dbReference>
<dbReference type="GO" id="GO:0048169">
    <property type="term" value="P:regulation of long-term neuronal synaptic plasticity"/>
    <property type="evidence" value="ECO:0007669"/>
    <property type="project" value="Ensembl"/>
</dbReference>
<dbReference type="GO" id="GO:0048172">
    <property type="term" value="P:regulation of short-term neuronal synaptic plasticity"/>
    <property type="evidence" value="ECO:0007669"/>
    <property type="project" value="Ensembl"/>
</dbReference>
<dbReference type="GO" id="GO:0048499">
    <property type="term" value="P:synaptic vesicle membrane organization"/>
    <property type="evidence" value="ECO:0000250"/>
    <property type="project" value="UniProtKB"/>
</dbReference>
<dbReference type="InterPro" id="IPR008253">
    <property type="entry name" value="Marvel"/>
</dbReference>
<dbReference type="InterPro" id="IPR016579">
    <property type="entry name" value="Synaptogyrin"/>
</dbReference>
<dbReference type="PANTHER" id="PTHR10838">
    <property type="entry name" value="SYNAPTOGYRIN"/>
    <property type="match status" value="1"/>
</dbReference>
<dbReference type="PANTHER" id="PTHR10838:SF7">
    <property type="entry name" value="SYNAPTOGYRIN-1"/>
    <property type="match status" value="1"/>
</dbReference>
<dbReference type="Pfam" id="PF01284">
    <property type="entry name" value="MARVEL"/>
    <property type="match status" value="1"/>
</dbReference>
<dbReference type="PIRSF" id="PIRSF011282">
    <property type="entry name" value="Synaptogyrin"/>
    <property type="match status" value="1"/>
</dbReference>
<dbReference type="PROSITE" id="PS51225">
    <property type="entry name" value="MARVEL"/>
    <property type="match status" value="1"/>
</dbReference>
<accession>Q5R703</accession>
<feature type="chain" id="PRO_0000343946" description="Synaptogyrin-1">
    <location>
        <begin position="1"/>
        <end position="234"/>
    </location>
</feature>
<feature type="topological domain" description="Cytoplasmic" evidence="3">
    <location>
        <begin position="1"/>
        <end position="23"/>
    </location>
</feature>
<feature type="transmembrane region" description="Helical" evidence="4">
    <location>
        <begin position="24"/>
        <end position="44"/>
    </location>
</feature>
<feature type="topological domain" description="Lumenal" evidence="3">
    <location>
        <begin position="45"/>
        <end position="71"/>
    </location>
</feature>
<feature type="transmembrane region" description="Helical" evidence="4">
    <location>
        <begin position="72"/>
        <end position="92"/>
    </location>
</feature>
<feature type="topological domain" description="Cytoplasmic" evidence="3">
    <location>
        <begin position="93"/>
        <end position="103"/>
    </location>
</feature>
<feature type="transmembrane region" description="Helical" evidence="4">
    <location>
        <begin position="104"/>
        <end position="124"/>
    </location>
</feature>
<feature type="topological domain" description="Lumenal" evidence="3">
    <location>
        <begin position="125"/>
        <end position="148"/>
    </location>
</feature>
<feature type="transmembrane region" description="Helical" evidence="4">
    <location>
        <begin position="149"/>
        <end position="169"/>
    </location>
</feature>
<feature type="topological domain" description="Cytoplasmic" evidence="3">
    <location>
        <begin position="170"/>
        <end position="234"/>
    </location>
</feature>
<feature type="domain" description="MARVEL" evidence="5">
    <location>
        <begin position="20"/>
        <end position="173"/>
    </location>
</feature>
<feature type="region of interest" description="Disordered" evidence="6">
    <location>
        <begin position="192"/>
        <end position="234"/>
    </location>
</feature>
<feature type="compositionally biased region" description="Polar residues" evidence="6">
    <location>
        <begin position="214"/>
        <end position="234"/>
    </location>
</feature>
<feature type="modified residue" description="N-acetylmethionine" evidence="1">
    <location>
        <position position="1"/>
    </location>
</feature>
<proteinExistence type="evidence at transcript level"/>
<comment type="function">
    <text evidence="2 3">May play a role in regulated exocytosis. Modulates the localization of synaptophysin/SYP into synaptic-like microvesicles and may therefore play a role in synaptic-like microvesicle formation and/or maturation (By similarity). Involved in the regulation of short-term and long-term synaptic plasticity (By similarity).</text>
</comment>
<comment type="subcellular location">
    <subcellularLocation>
        <location evidence="3">Cytoplasmic vesicle</location>
        <location evidence="3">Secretory vesicle</location>
        <location evidence="3">Synaptic vesicle membrane</location>
        <topology evidence="3">Multi-pass membrane protein</topology>
    </subcellularLocation>
    <subcellularLocation>
        <location evidence="1">Melanosome</location>
    </subcellularLocation>
</comment>
<comment type="similarity">
    <text evidence="7">Belongs to the synaptogyrin family.</text>
</comment>
<evidence type="ECO:0000250" key="1">
    <source>
        <dbReference type="UniProtKB" id="O43759"/>
    </source>
</evidence>
<evidence type="ECO:0000250" key="2">
    <source>
        <dbReference type="UniProtKB" id="O55100"/>
    </source>
</evidence>
<evidence type="ECO:0000250" key="3">
    <source>
        <dbReference type="UniProtKB" id="Q62876"/>
    </source>
</evidence>
<evidence type="ECO:0000255" key="4"/>
<evidence type="ECO:0000255" key="5">
    <source>
        <dbReference type="PROSITE-ProRule" id="PRU00581"/>
    </source>
</evidence>
<evidence type="ECO:0000256" key="6">
    <source>
        <dbReference type="SAM" id="MobiDB-lite"/>
    </source>
</evidence>
<evidence type="ECO:0000305" key="7"/>
<organism>
    <name type="scientific">Pongo abelii</name>
    <name type="common">Sumatran orangutan</name>
    <name type="synonym">Pongo pygmaeus abelii</name>
    <dbReference type="NCBI Taxonomy" id="9601"/>
    <lineage>
        <taxon>Eukaryota</taxon>
        <taxon>Metazoa</taxon>
        <taxon>Chordata</taxon>
        <taxon>Craniata</taxon>
        <taxon>Vertebrata</taxon>
        <taxon>Euteleostomi</taxon>
        <taxon>Mammalia</taxon>
        <taxon>Eutheria</taxon>
        <taxon>Euarchontoglires</taxon>
        <taxon>Primates</taxon>
        <taxon>Haplorrhini</taxon>
        <taxon>Catarrhini</taxon>
        <taxon>Hominidae</taxon>
        <taxon>Pongo</taxon>
    </lineage>
</organism>
<protein>
    <recommendedName>
        <fullName evidence="7">Synaptogyrin-1</fullName>
    </recommendedName>
</protein>
<gene>
    <name evidence="1" type="primary">SYNGR1</name>
</gene>
<keyword id="KW-0007">Acetylation</keyword>
<keyword id="KW-0968">Cytoplasmic vesicle</keyword>
<keyword id="KW-0472">Membrane</keyword>
<keyword id="KW-1185">Reference proteome</keyword>
<keyword id="KW-0770">Synapse</keyword>
<keyword id="KW-0812">Transmembrane</keyword>
<keyword id="KW-1133">Transmembrane helix</keyword>
<sequence>MEGGAYGAGKAGGAFDPYALVRQPHTILRVVSWLFSIVVFGSIVNEGYLNSASEGEEFCIYNRNPNACSYGVAVGVLAFLTCLLYLALDVYFPQISSVKDRKKAVLSDIGVSAFWAFLWFVGFCYLANQWQVSKPKDNPLNEGTDAARAAIAFSFFSIFTWAGQAVLAFQRYQIGADSALFSQDYMDPSQDSSMPYAPYVEPSTGPDPAGMGGTYQQPANTFDTEPQGYQSQGY</sequence>
<reference key="1">
    <citation type="submission" date="2004-11" db="EMBL/GenBank/DDBJ databases">
        <authorList>
            <consortium name="The German cDNA consortium"/>
        </authorList>
    </citation>
    <scope>NUCLEOTIDE SEQUENCE [LARGE SCALE MRNA]</scope>
    <source>
        <tissue>Brain cortex</tissue>
    </source>
</reference>
<name>SNG1_PONAB</name>